<name>YSL6_ORYSJ</name>
<feature type="chain" id="PRO_0000363869" description="Probable metal-nicotianamine transporter YSL6">
    <location>
        <begin position="1"/>
        <end position="678"/>
    </location>
</feature>
<feature type="transmembrane region" description="Helical" evidence="2">
    <location>
        <begin position="41"/>
        <end position="61"/>
    </location>
</feature>
<feature type="transmembrane region" description="Helical" evidence="2">
    <location>
        <begin position="65"/>
        <end position="85"/>
    </location>
</feature>
<feature type="transmembrane region" description="Helical" evidence="2">
    <location>
        <begin position="113"/>
        <end position="133"/>
    </location>
</feature>
<feature type="transmembrane region" description="Helical" evidence="2">
    <location>
        <begin position="158"/>
        <end position="178"/>
    </location>
</feature>
<feature type="transmembrane region" description="Helical" evidence="2">
    <location>
        <begin position="226"/>
        <end position="246"/>
    </location>
</feature>
<feature type="transmembrane region" description="Helical" evidence="2">
    <location>
        <begin position="279"/>
        <end position="299"/>
    </location>
</feature>
<feature type="transmembrane region" description="Helical" evidence="2">
    <location>
        <begin position="324"/>
        <end position="344"/>
    </location>
</feature>
<feature type="transmembrane region" description="Helical" evidence="2">
    <location>
        <begin position="394"/>
        <end position="414"/>
    </location>
</feature>
<feature type="transmembrane region" description="Helical" evidence="2">
    <location>
        <begin position="419"/>
        <end position="439"/>
    </location>
</feature>
<feature type="transmembrane region" description="Helical" evidence="2">
    <location>
        <begin position="467"/>
        <end position="487"/>
    </location>
</feature>
<feature type="transmembrane region" description="Helical" evidence="2">
    <location>
        <begin position="512"/>
        <end position="532"/>
    </location>
</feature>
<feature type="transmembrane region" description="Helical" evidence="2">
    <location>
        <begin position="561"/>
        <end position="581"/>
    </location>
</feature>
<feature type="transmembrane region" description="Helical" evidence="2">
    <location>
        <begin position="606"/>
        <end position="626"/>
    </location>
</feature>
<feature type="transmembrane region" description="Helical" evidence="2">
    <location>
        <begin position="641"/>
        <end position="661"/>
    </location>
</feature>
<feature type="sequence conflict" description="In Ref. 6; EAZ30539." evidence="5" ref="6">
    <original>GGD</original>
    <variation>AGN</variation>
    <location>
        <begin position="22"/>
        <end position="24"/>
    </location>
</feature>
<feature type="sequence conflict" description="In Ref. 6; EAZ30539." evidence="5" ref="6">
    <original>VE</original>
    <variation>LK</variation>
    <location>
        <begin position="31"/>
        <end position="32"/>
    </location>
</feature>
<feature type="sequence conflict" description="In Ref. 1; BAE91886." evidence="5" ref="1">
    <original>S</original>
    <variation>L</variation>
    <location>
        <position position="572"/>
    </location>
</feature>
<feature type="sequence conflict" description="In Ref. 1; BAE91886." evidence="5" ref="1">
    <original>A</original>
    <variation>V</variation>
    <location>
        <position position="577"/>
    </location>
</feature>
<keyword id="KW-0472">Membrane</keyword>
<keyword id="KW-1185">Reference proteome</keyword>
<keyword id="KW-0812">Transmembrane</keyword>
<keyword id="KW-1133">Transmembrane helix</keyword>
<keyword id="KW-0813">Transport</keyword>
<reference key="1">
    <citation type="journal article" date="2004" name="Plant J.">
        <title>OsYSL2 is a rice metal-nicotianamine transporter that is regulated by iron and expressed in the phloem.</title>
        <authorList>
            <person name="Koike S."/>
            <person name="Inoue H."/>
            <person name="Mizuno D."/>
            <person name="Takahashi M."/>
            <person name="Nakanishi H."/>
            <person name="Mori S."/>
            <person name="Nishizawa N.K."/>
        </authorList>
    </citation>
    <scope>NUCLEOTIDE SEQUENCE [MRNA]</scope>
    <scope>TISSUE SPECIFICITY</scope>
    <scope>GENE FAMILY</scope>
    <scope>NOMENCLATURE</scope>
    <source>
        <strain>cv. Nipponbare</strain>
    </source>
</reference>
<reference key="2">
    <citation type="journal article" date="2002" name="Nature">
        <title>Sequence and analysis of rice chromosome 4.</title>
        <authorList>
            <person name="Feng Q."/>
            <person name="Zhang Y."/>
            <person name="Hao P."/>
            <person name="Wang S."/>
            <person name="Fu G."/>
            <person name="Huang Y."/>
            <person name="Li Y."/>
            <person name="Zhu J."/>
            <person name="Liu Y."/>
            <person name="Hu X."/>
            <person name="Jia P."/>
            <person name="Zhang Y."/>
            <person name="Zhao Q."/>
            <person name="Ying K."/>
            <person name="Yu S."/>
            <person name="Tang Y."/>
            <person name="Weng Q."/>
            <person name="Zhang L."/>
            <person name="Lu Y."/>
            <person name="Mu J."/>
            <person name="Lu Y."/>
            <person name="Zhang L.S."/>
            <person name="Yu Z."/>
            <person name="Fan D."/>
            <person name="Liu X."/>
            <person name="Lu T."/>
            <person name="Li C."/>
            <person name="Wu Y."/>
            <person name="Sun T."/>
            <person name="Lei H."/>
            <person name="Li T."/>
            <person name="Hu H."/>
            <person name="Guan J."/>
            <person name="Wu M."/>
            <person name="Zhang R."/>
            <person name="Zhou B."/>
            <person name="Chen Z."/>
            <person name="Chen L."/>
            <person name="Jin Z."/>
            <person name="Wang R."/>
            <person name="Yin H."/>
            <person name="Cai Z."/>
            <person name="Ren S."/>
            <person name="Lv G."/>
            <person name="Gu W."/>
            <person name="Zhu G."/>
            <person name="Tu Y."/>
            <person name="Jia J."/>
            <person name="Zhang Y."/>
            <person name="Chen J."/>
            <person name="Kang H."/>
            <person name="Chen X."/>
            <person name="Shao C."/>
            <person name="Sun Y."/>
            <person name="Hu Q."/>
            <person name="Zhang X."/>
            <person name="Zhang W."/>
            <person name="Wang L."/>
            <person name="Ding C."/>
            <person name="Sheng H."/>
            <person name="Gu J."/>
            <person name="Chen S."/>
            <person name="Ni L."/>
            <person name="Zhu F."/>
            <person name="Chen W."/>
            <person name="Lan L."/>
            <person name="Lai Y."/>
            <person name="Cheng Z."/>
            <person name="Gu M."/>
            <person name="Jiang J."/>
            <person name="Li J."/>
            <person name="Hong G."/>
            <person name="Xue Y."/>
            <person name="Han B."/>
        </authorList>
    </citation>
    <scope>NUCLEOTIDE SEQUENCE [LARGE SCALE GENOMIC DNA]</scope>
    <source>
        <strain>cv. Nipponbare</strain>
    </source>
</reference>
<reference key="3">
    <citation type="journal article" date="2005" name="Nature">
        <title>The map-based sequence of the rice genome.</title>
        <authorList>
            <consortium name="International rice genome sequencing project (IRGSP)"/>
        </authorList>
    </citation>
    <scope>NUCLEOTIDE SEQUENCE [LARGE SCALE GENOMIC DNA]</scope>
    <source>
        <strain>cv. Nipponbare</strain>
    </source>
</reference>
<reference key="4">
    <citation type="journal article" date="2008" name="Nucleic Acids Res.">
        <title>The rice annotation project database (RAP-DB): 2008 update.</title>
        <authorList>
            <consortium name="The rice annotation project (RAP)"/>
        </authorList>
    </citation>
    <scope>GENOME REANNOTATION</scope>
    <source>
        <strain>cv. Nipponbare</strain>
    </source>
</reference>
<reference key="5">
    <citation type="journal article" date="2013" name="Rice">
        <title>Improvement of the Oryza sativa Nipponbare reference genome using next generation sequence and optical map data.</title>
        <authorList>
            <person name="Kawahara Y."/>
            <person name="de la Bastide M."/>
            <person name="Hamilton J.P."/>
            <person name="Kanamori H."/>
            <person name="McCombie W.R."/>
            <person name="Ouyang S."/>
            <person name="Schwartz D.C."/>
            <person name="Tanaka T."/>
            <person name="Wu J."/>
            <person name="Zhou S."/>
            <person name="Childs K.L."/>
            <person name="Davidson R.M."/>
            <person name="Lin H."/>
            <person name="Quesada-Ocampo L."/>
            <person name="Vaillancourt B."/>
            <person name="Sakai H."/>
            <person name="Lee S.S."/>
            <person name="Kim J."/>
            <person name="Numa H."/>
            <person name="Itoh T."/>
            <person name="Buell C.R."/>
            <person name="Matsumoto T."/>
        </authorList>
    </citation>
    <scope>GENOME REANNOTATION</scope>
    <source>
        <strain>cv. Nipponbare</strain>
    </source>
</reference>
<reference key="6">
    <citation type="journal article" date="2005" name="PLoS Biol.">
        <title>The genomes of Oryza sativa: a history of duplications.</title>
        <authorList>
            <person name="Yu J."/>
            <person name="Wang J."/>
            <person name="Lin W."/>
            <person name="Li S."/>
            <person name="Li H."/>
            <person name="Zhou J."/>
            <person name="Ni P."/>
            <person name="Dong W."/>
            <person name="Hu S."/>
            <person name="Zeng C."/>
            <person name="Zhang J."/>
            <person name="Zhang Y."/>
            <person name="Li R."/>
            <person name="Xu Z."/>
            <person name="Li S."/>
            <person name="Li X."/>
            <person name="Zheng H."/>
            <person name="Cong L."/>
            <person name="Lin L."/>
            <person name="Yin J."/>
            <person name="Geng J."/>
            <person name="Li G."/>
            <person name="Shi J."/>
            <person name="Liu J."/>
            <person name="Lv H."/>
            <person name="Li J."/>
            <person name="Wang J."/>
            <person name="Deng Y."/>
            <person name="Ran L."/>
            <person name="Shi X."/>
            <person name="Wang X."/>
            <person name="Wu Q."/>
            <person name="Li C."/>
            <person name="Ren X."/>
            <person name="Wang J."/>
            <person name="Wang X."/>
            <person name="Li D."/>
            <person name="Liu D."/>
            <person name="Zhang X."/>
            <person name="Ji Z."/>
            <person name="Zhao W."/>
            <person name="Sun Y."/>
            <person name="Zhang Z."/>
            <person name="Bao J."/>
            <person name="Han Y."/>
            <person name="Dong L."/>
            <person name="Ji J."/>
            <person name="Chen P."/>
            <person name="Wu S."/>
            <person name="Liu J."/>
            <person name="Xiao Y."/>
            <person name="Bu D."/>
            <person name="Tan J."/>
            <person name="Yang L."/>
            <person name="Ye C."/>
            <person name="Zhang J."/>
            <person name="Xu J."/>
            <person name="Zhou Y."/>
            <person name="Yu Y."/>
            <person name="Zhang B."/>
            <person name="Zhuang S."/>
            <person name="Wei H."/>
            <person name="Liu B."/>
            <person name="Lei M."/>
            <person name="Yu H."/>
            <person name="Li Y."/>
            <person name="Xu H."/>
            <person name="Wei S."/>
            <person name="He X."/>
            <person name="Fang L."/>
            <person name="Zhang Z."/>
            <person name="Zhang Y."/>
            <person name="Huang X."/>
            <person name="Su Z."/>
            <person name="Tong W."/>
            <person name="Li J."/>
            <person name="Tong Z."/>
            <person name="Li S."/>
            <person name="Ye J."/>
            <person name="Wang L."/>
            <person name="Fang L."/>
            <person name="Lei T."/>
            <person name="Chen C.-S."/>
            <person name="Chen H.-C."/>
            <person name="Xu Z."/>
            <person name="Li H."/>
            <person name="Huang H."/>
            <person name="Zhang F."/>
            <person name="Xu H."/>
            <person name="Li N."/>
            <person name="Zhao C."/>
            <person name="Li S."/>
            <person name="Dong L."/>
            <person name="Huang Y."/>
            <person name="Li L."/>
            <person name="Xi Y."/>
            <person name="Qi Q."/>
            <person name="Li W."/>
            <person name="Zhang B."/>
            <person name="Hu W."/>
            <person name="Zhang Y."/>
            <person name="Tian X."/>
            <person name="Jiao Y."/>
            <person name="Liang X."/>
            <person name="Jin J."/>
            <person name="Gao L."/>
            <person name="Zheng W."/>
            <person name="Hao B."/>
            <person name="Liu S.-M."/>
            <person name="Wang W."/>
            <person name="Yuan L."/>
            <person name="Cao M."/>
            <person name="McDermott J."/>
            <person name="Samudrala R."/>
            <person name="Wang J."/>
            <person name="Wong G.K.-S."/>
            <person name="Yang H."/>
        </authorList>
    </citation>
    <scope>NUCLEOTIDE SEQUENCE [LARGE SCALE GENOMIC DNA]</scope>
    <source>
        <strain>cv. Nipponbare</strain>
    </source>
</reference>
<reference key="7">
    <citation type="journal article" date="2003" name="Science">
        <title>Collection, mapping, and annotation of over 28,000 cDNA clones from japonica rice.</title>
        <authorList>
            <consortium name="The rice full-length cDNA consortium"/>
        </authorList>
    </citation>
    <scope>NUCLEOTIDE SEQUENCE [LARGE SCALE MRNA]</scope>
    <source>
        <strain>cv. Nipponbare</strain>
    </source>
</reference>
<reference key="8">
    <citation type="journal article" date="2009" name="J. Biol. Chem.">
        <title>Rice OsYSL15 is an iron-regulated iron(III)-deoxymugineic acid Transporter expressed in the roots and is essential for iron uptake in early growth of the seedlings.</title>
        <authorList>
            <person name="Inoue H."/>
            <person name="Kobayashi T."/>
            <person name="Nozoye T."/>
            <person name="Takahashi M."/>
            <person name="Kakei Y."/>
            <person name="Suzuki K."/>
            <person name="Nakazono M."/>
            <person name="Nakanishi H."/>
            <person name="Mori S."/>
            <person name="Nishizawa N.K."/>
        </authorList>
    </citation>
    <scope>TISSUE SPECIFICITY</scope>
</reference>
<accession>Q7XRV2</accession>
<accession>A3ATA0</accession>
<accession>Q25CI0</accession>
<evidence type="ECO:0000250" key="1"/>
<evidence type="ECO:0000255" key="2"/>
<evidence type="ECO:0000269" key="3">
    <source>
    </source>
</evidence>
<evidence type="ECO:0000269" key="4">
    <source>
    </source>
</evidence>
<evidence type="ECO:0000305" key="5"/>
<proteinExistence type="evidence at transcript level"/>
<gene>
    <name type="primary">YSL6</name>
    <name type="ordered locus">Os04g0390500</name>
    <name type="ordered locus">LOC_Os04g32050</name>
    <name type="ORF">OsJ_014022</name>
    <name type="ORF">OSJNBa0055C08.1</name>
</gene>
<sequence>MGSVADDAEITGPLLAAAAGGGGDSAAAAGVERVPAWREQVTVRGIVVSAVLGVLFCLITHKLNLTVGVIPSLNVSAGLLGYFLVRSWTAVLGRLGFVIAPFTKQENTVIQTCVVACYGLAFSGGFGSYMLAMDQKTYELIGPDYPGNRAIDVMNPSLGWMIGFMFVVSFLGLFSLVALRKVMVIDYKLTYPSGTATAMLINSFHTTSGAELAEKQVSCLGKYLSISFFWNCFKWFFSGVGDSCGFDNFPSLGLAAFKNTFYFDFSPTYIGCGLICPHIVNCSTLLGAIISWGFLWPYISTKAGDWYPANLGSNDFKGLYGYKVFISVSVILGDGLYNLIKIIYATIKEVMNARSKQGRLPLVRVHDDDEGSKLSAEEKLRNDTFLKDRIPSWLAGSGYVGLAAISTATVPMIFPQVKWYLVLCAYVVAPLLAFCNSYGCGLTDWNLASTYGKIGLFIFASLVGRSGGVIAGLAACGVMMSIVSTAADLMQDFRTGYLTLSSPRSMFVSQLIGTTLGCIIAPLTFWLYWTAFDIGNPDGMFKAPYAVIYREMSILGVEGFSALPQHCLAICSVFFVAAILINLLRDVTPKSVSKFIPLPMAMAVPFYIGAYFAIDMFVGTVILFVWERVNRKESEDFAGAIASGLICGDGIWSVPSAILSIMRIDPPMCMYFKPSLTS</sequence>
<protein>
    <recommendedName>
        <fullName>Probable metal-nicotianamine transporter YSL6</fullName>
    </recommendedName>
    <alternativeName>
        <fullName>Protein YELLOW STRIPE LIKE 6</fullName>
        <shortName>OsYSL6</shortName>
    </alternativeName>
</protein>
<organism>
    <name type="scientific">Oryza sativa subsp. japonica</name>
    <name type="common">Rice</name>
    <dbReference type="NCBI Taxonomy" id="39947"/>
    <lineage>
        <taxon>Eukaryota</taxon>
        <taxon>Viridiplantae</taxon>
        <taxon>Streptophyta</taxon>
        <taxon>Embryophyta</taxon>
        <taxon>Tracheophyta</taxon>
        <taxon>Spermatophyta</taxon>
        <taxon>Magnoliopsida</taxon>
        <taxon>Liliopsida</taxon>
        <taxon>Poales</taxon>
        <taxon>Poaceae</taxon>
        <taxon>BOP clade</taxon>
        <taxon>Oryzoideae</taxon>
        <taxon>Oryzeae</taxon>
        <taxon>Oryzinae</taxon>
        <taxon>Oryza</taxon>
        <taxon>Oryza sativa</taxon>
    </lineage>
</organism>
<dbReference type="EMBL" id="AB190916">
    <property type="protein sequence ID" value="BAE91886.1"/>
    <property type="molecule type" value="mRNA"/>
</dbReference>
<dbReference type="EMBL" id="AL731600">
    <property type="protein sequence ID" value="CAE02278.1"/>
    <property type="molecule type" value="Genomic_DNA"/>
</dbReference>
<dbReference type="EMBL" id="AP008210">
    <property type="protein sequence ID" value="BAF14554.2"/>
    <property type="status" value="ALT_SEQ"/>
    <property type="molecule type" value="Genomic_DNA"/>
</dbReference>
<dbReference type="EMBL" id="AP014960">
    <property type="protein sequence ID" value="BAS88960.1"/>
    <property type="molecule type" value="Genomic_DNA"/>
</dbReference>
<dbReference type="EMBL" id="CM000141">
    <property type="protein sequence ID" value="EAZ30539.1"/>
    <property type="molecule type" value="Genomic_DNA"/>
</dbReference>
<dbReference type="EMBL" id="AK100148">
    <property type="protein sequence ID" value="BAG94466.1"/>
    <property type="molecule type" value="mRNA"/>
</dbReference>
<dbReference type="RefSeq" id="XP_015635791.1">
    <property type="nucleotide sequence ID" value="XM_015780305.1"/>
</dbReference>
<dbReference type="SMR" id="Q7XRV2"/>
<dbReference type="FunCoup" id="Q7XRV2">
    <property type="interactions" value="394"/>
</dbReference>
<dbReference type="STRING" id="39947.Q7XRV2"/>
<dbReference type="PaxDb" id="39947-Q7XRV2"/>
<dbReference type="EnsemblPlants" id="Os04t0390500-02">
    <property type="protein sequence ID" value="Os04t0390500-02"/>
    <property type="gene ID" value="Os04g0390500"/>
</dbReference>
<dbReference type="EnsemblPlants" id="Os04t0390500-03">
    <property type="protein sequence ID" value="Os04t0390500-03"/>
    <property type="gene ID" value="Os04g0390500"/>
</dbReference>
<dbReference type="Gramene" id="Os04t0390500-02">
    <property type="protein sequence ID" value="Os04t0390500-02"/>
    <property type="gene ID" value="Os04g0390500"/>
</dbReference>
<dbReference type="Gramene" id="Os04t0390500-03">
    <property type="protein sequence ID" value="Os04t0390500-03"/>
    <property type="gene ID" value="Os04g0390500"/>
</dbReference>
<dbReference type="KEGG" id="dosa:Os04g0390500"/>
<dbReference type="eggNOG" id="ENOG502QQ2H">
    <property type="taxonomic scope" value="Eukaryota"/>
</dbReference>
<dbReference type="InParanoid" id="Q7XRV2"/>
<dbReference type="OMA" id="GIGMYLP"/>
<dbReference type="OrthoDB" id="627262at2759"/>
<dbReference type="Proteomes" id="UP000000763">
    <property type="component" value="Chromosome 4"/>
</dbReference>
<dbReference type="Proteomes" id="UP000007752">
    <property type="component" value="Chromosome 4"/>
</dbReference>
<dbReference type="Proteomes" id="UP000059680">
    <property type="component" value="Chromosome 4"/>
</dbReference>
<dbReference type="ExpressionAtlas" id="Q7XRV2">
    <property type="expression patterns" value="baseline and differential"/>
</dbReference>
<dbReference type="GO" id="GO:0005774">
    <property type="term" value="C:vacuolar membrane"/>
    <property type="evidence" value="ECO:0000318"/>
    <property type="project" value="GO_Central"/>
</dbReference>
<dbReference type="GO" id="GO:0035673">
    <property type="term" value="F:oligopeptide transmembrane transporter activity"/>
    <property type="evidence" value="ECO:0007669"/>
    <property type="project" value="InterPro"/>
</dbReference>
<dbReference type="InterPro" id="IPR004813">
    <property type="entry name" value="OPT"/>
</dbReference>
<dbReference type="InterPro" id="IPR045035">
    <property type="entry name" value="YSL-like"/>
</dbReference>
<dbReference type="NCBIfam" id="TIGR00728">
    <property type="entry name" value="OPT_sfam"/>
    <property type="match status" value="1"/>
</dbReference>
<dbReference type="PANTHER" id="PTHR31645">
    <property type="entry name" value="OLIGOPEPTIDE TRANSPORTER YGL114W-RELATED"/>
    <property type="match status" value="1"/>
</dbReference>
<dbReference type="PANTHER" id="PTHR31645:SF0">
    <property type="entry name" value="OLIGOPEPTIDE TRANSPORTER YGL114W-RELATED"/>
    <property type="match status" value="1"/>
</dbReference>
<dbReference type="Pfam" id="PF03169">
    <property type="entry name" value="OPT"/>
    <property type="match status" value="1"/>
</dbReference>
<comment type="function">
    <text evidence="1">May be involved in the transport of nicotianamine-chelated metals.</text>
</comment>
<comment type="subcellular location">
    <subcellularLocation>
        <location evidence="5">Membrane</location>
        <topology evidence="5">Multi-pass membrane protein</topology>
    </subcellularLocation>
</comment>
<comment type="tissue specificity">
    <text evidence="3 4">Expressed in roots and leaves.</text>
</comment>
<comment type="similarity">
    <text evidence="5">Belongs to the YSL (TC 2.A.67.2) family.</text>
</comment>
<comment type="sequence caution" evidence="5">
    <conflict type="erroneous gene model prediction">
        <sequence resource="EMBL-CDS" id="BAF14554"/>
    </conflict>
</comment>